<organism>
    <name type="scientific">Talaromyces stipitatus (strain ATCC 10500 / CBS 375.48 / QM 6759 / NRRL 1006)</name>
    <name type="common">Penicillium stipitatum</name>
    <dbReference type="NCBI Taxonomy" id="441959"/>
    <lineage>
        <taxon>Eukaryota</taxon>
        <taxon>Fungi</taxon>
        <taxon>Dikarya</taxon>
        <taxon>Ascomycota</taxon>
        <taxon>Pezizomycotina</taxon>
        <taxon>Eurotiomycetes</taxon>
        <taxon>Eurotiomycetidae</taxon>
        <taxon>Eurotiales</taxon>
        <taxon>Trichocomaceae</taxon>
        <taxon>Talaromyces</taxon>
        <taxon>Talaromyces sect. Talaromyces</taxon>
    </lineage>
</organism>
<accession>B8MQZ4</accession>
<evidence type="ECO:0000255" key="1">
    <source>
        <dbReference type="HAMAP-Rule" id="MF_03139"/>
    </source>
</evidence>
<comment type="function">
    <text evidence="1">Catalyzes the reaction of cyanate with bicarbonate to produce ammonia and carbon dioxide.</text>
</comment>
<comment type="catalytic activity">
    <reaction evidence="1">
        <text>cyanate + hydrogencarbonate + 3 H(+) = NH4(+) + 2 CO2</text>
        <dbReference type="Rhea" id="RHEA:11120"/>
        <dbReference type="ChEBI" id="CHEBI:15378"/>
        <dbReference type="ChEBI" id="CHEBI:16526"/>
        <dbReference type="ChEBI" id="CHEBI:17544"/>
        <dbReference type="ChEBI" id="CHEBI:28938"/>
        <dbReference type="ChEBI" id="CHEBI:29195"/>
        <dbReference type="EC" id="4.2.1.104"/>
    </reaction>
</comment>
<comment type="similarity">
    <text evidence="1">Belongs to the cyanase family.</text>
</comment>
<protein>
    <recommendedName>
        <fullName evidence="1">Cyanate hydratase</fullName>
        <shortName evidence="1">Cyanase</shortName>
        <ecNumber evidence="1">4.2.1.104</ecNumber>
    </recommendedName>
    <alternativeName>
        <fullName evidence="1">Cyanate hydrolase</fullName>
    </alternativeName>
    <alternativeName>
        <fullName evidence="1">Cyanate lyase</fullName>
    </alternativeName>
</protein>
<sequence>MSHLNLATLDTSQHPYLPASSQTLFAAKAKRKFTFEDISKQIGRNEVATAAIFYGQAKASAEDIANLAKVLDIPLKLLEEQLSGFPDRGRSVEMPPKEPLIYRLYEIVQNYGYAYKAVLNEKFGDGIMSAISFSTKVEKETDADGNNWAVITLRGKWLPFSRF</sequence>
<proteinExistence type="inferred from homology"/>
<dbReference type="EC" id="4.2.1.104" evidence="1"/>
<dbReference type="EMBL" id="EQ962659">
    <property type="protein sequence ID" value="EED12829.1"/>
    <property type="molecule type" value="Genomic_DNA"/>
</dbReference>
<dbReference type="RefSeq" id="XP_002486940.1">
    <property type="nucleotide sequence ID" value="XM_002486895.1"/>
</dbReference>
<dbReference type="SMR" id="B8MQZ4"/>
<dbReference type="STRING" id="441959.B8MQZ4"/>
<dbReference type="GeneID" id="8098298"/>
<dbReference type="VEuPathDB" id="FungiDB:TSTA_053470"/>
<dbReference type="eggNOG" id="ENOG502S3YJ">
    <property type="taxonomic scope" value="Eukaryota"/>
</dbReference>
<dbReference type="HOGENOM" id="CLU_103452_0_0_1"/>
<dbReference type="InParanoid" id="B8MQZ4"/>
<dbReference type="OMA" id="YELVMIN"/>
<dbReference type="OrthoDB" id="10019422at2759"/>
<dbReference type="PhylomeDB" id="B8MQZ4"/>
<dbReference type="Proteomes" id="UP000001745">
    <property type="component" value="Unassembled WGS sequence"/>
</dbReference>
<dbReference type="GO" id="GO:0008824">
    <property type="term" value="F:cyanate hydratase activity"/>
    <property type="evidence" value="ECO:0007669"/>
    <property type="project" value="UniProtKB-UniRule"/>
</dbReference>
<dbReference type="GO" id="GO:0003677">
    <property type="term" value="F:DNA binding"/>
    <property type="evidence" value="ECO:0007669"/>
    <property type="project" value="InterPro"/>
</dbReference>
<dbReference type="GO" id="GO:0009439">
    <property type="term" value="P:cyanate metabolic process"/>
    <property type="evidence" value="ECO:0007669"/>
    <property type="project" value="UniProtKB-UniRule"/>
</dbReference>
<dbReference type="CDD" id="cd00559">
    <property type="entry name" value="Cyanase_C"/>
    <property type="match status" value="1"/>
</dbReference>
<dbReference type="Gene3D" id="3.30.1160.10">
    <property type="entry name" value="Cyanate lyase, C-terminal domain"/>
    <property type="match status" value="1"/>
</dbReference>
<dbReference type="Gene3D" id="1.10.260.40">
    <property type="entry name" value="lambda repressor-like DNA-binding domains"/>
    <property type="match status" value="1"/>
</dbReference>
<dbReference type="HAMAP" id="MF_00535">
    <property type="entry name" value="Cyanate_hydrat"/>
    <property type="match status" value="1"/>
</dbReference>
<dbReference type="InterPro" id="IPR008076">
    <property type="entry name" value="Cyanase"/>
</dbReference>
<dbReference type="InterPro" id="IPR003712">
    <property type="entry name" value="Cyanate_lyase_C"/>
</dbReference>
<dbReference type="InterPro" id="IPR036581">
    <property type="entry name" value="Cyanate_lyase_C_sf"/>
</dbReference>
<dbReference type="InterPro" id="IPR010982">
    <property type="entry name" value="Lambda_DNA-bd_dom_sf"/>
</dbReference>
<dbReference type="NCBIfam" id="TIGR00673">
    <property type="entry name" value="cynS"/>
    <property type="match status" value="1"/>
</dbReference>
<dbReference type="PANTHER" id="PTHR34186">
    <property type="entry name" value="CYANATE HYDRATASE"/>
    <property type="match status" value="1"/>
</dbReference>
<dbReference type="PANTHER" id="PTHR34186:SF2">
    <property type="entry name" value="CYANATE HYDRATASE"/>
    <property type="match status" value="1"/>
</dbReference>
<dbReference type="Pfam" id="PF02560">
    <property type="entry name" value="Cyanate_lyase"/>
    <property type="match status" value="1"/>
</dbReference>
<dbReference type="PIRSF" id="PIRSF001263">
    <property type="entry name" value="Cyanate_hydratas"/>
    <property type="match status" value="1"/>
</dbReference>
<dbReference type="PRINTS" id="PR01693">
    <property type="entry name" value="CYANASE"/>
</dbReference>
<dbReference type="SMART" id="SM01116">
    <property type="entry name" value="Cyanate_lyase"/>
    <property type="match status" value="1"/>
</dbReference>
<dbReference type="SUPFAM" id="SSF55234">
    <property type="entry name" value="Cyanase C-terminal domain"/>
    <property type="match status" value="1"/>
</dbReference>
<dbReference type="SUPFAM" id="SSF47413">
    <property type="entry name" value="lambda repressor-like DNA-binding domains"/>
    <property type="match status" value="1"/>
</dbReference>
<gene>
    <name evidence="1" type="primary">cyn1</name>
    <name type="ORF">TSTA_053470</name>
</gene>
<feature type="chain" id="PRO_0000403268" description="Cyanate hydratase">
    <location>
        <begin position="1"/>
        <end position="163"/>
    </location>
</feature>
<feature type="active site" evidence="1">
    <location>
        <position position="103"/>
    </location>
</feature>
<feature type="active site" evidence="1">
    <location>
        <position position="106"/>
    </location>
</feature>
<feature type="active site" evidence="1">
    <location>
        <position position="129"/>
    </location>
</feature>
<keyword id="KW-0456">Lyase</keyword>
<keyword id="KW-1185">Reference proteome</keyword>
<reference key="1">
    <citation type="journal article" date="2015" name="Genome Announc.">
        <title>Genome sequence of the AIDS-associated pathogen Penicillium marneffei (ATCC18224) and its near taxonomic relative Talaromyces stipitatus (ATCC10500).</title>
        <authorList>
            <person name="Nierman W.C."/>
            <person name="Fedorova-Abrams N.D."/>
            <person name="Andrianopoulos A."/>
        </authorList>
    </citation>
    <scope>NUCLEOTIDE SEQUENCE [LARGE SCALE GENOMIC DNA]</scope>
    <source>
        <strain>ATCC 10500 / CBS 375.48 / QM 6759 / NRRL 1006</strain>
    </source>
</reference>
<name>CYNS_TALSN</name>